<gene>
    <name type="primary">gid8a</name>
    <name evidence="5" type="synonym">twa1</name>
    <name type="ORF">zgc:73100</name>
</gene>
<comment type="function">
    <text evidence="1 4">Core component of the CTLH E3 ubiquitin-protein ligase complex that selectively accepts ubiquitin from UBE2H and mediates ubiquitination and subsequent proteasomal degradation of target proteins (By similarity). Acts as a positive regulator of Wnt signaling pathway by promoting beta-catenin (CTNNB1) nuclear accumulation (By similarity). Required for normal Wnt signaling and normal dorsoventral patterning during embryogenesis (PubMed:28829046).</text>
</comment>
<comment type="subunit">
    <text evidence="1">Identified in the CTLH complex that contains at least MAEA, RMND5A (or alternatively its paralog RMND5B), GID8, WDR26, and RANBP9 and/or RANBP10. Interacts with CTNNB1.</text>
</comment>
<comment type="developmental stage">
    <text evidence="4">Expressed in the early developmental stages of embryos.</text>
</comment>
<comment type="disruption phenotype">
    <text evidence="4">Morpholino knockdown produces morphants which exhibit loss or reduction of dorsal embryonic structures and Wnt signaling deficiency.</text>
</comment>
<comment type="similarity">
    <text evidence="6">Belongs to the GID8 family.</text>
</comment>
<accession>Q6PC55</accession>
<evidence type="ECO:0000250" key="1">
    <source>
        <dbReference type="UniProtKB" id="Q9NWU2"/>
    </source>
</evidence>
<evidence type="ECO:0000255" key="2">
    <source>
        <dbReference type="PROSITE-ProRule" id="PRU00058"/>
    </source>
</evidence>
<evidence type="ECO:0000255" key="3">
    <source>
        <dbReference type="PROSITE-ProRule" id="PRU00126"/>
    </source>
</evidence>
<evidence type="ECO:0000269" key="4">
    <source>
    </source>
</evidence>
<evidence type="ECO:0000303" key="5">
    <source>
    </source>
</evidence>
<evidence type="ECO:0000305" key="6"/>
<reference key="1">
    <citation type="submission" date="2003-10" db="EMBL/GenBank/DDBJ databases">
        <authorList>
            <consortium name="NIH - Zebrafish Gene Collection (ZGC) project"/>
        </authorList>
    </citation>
    <scope>NUCLEOTIDE SEQUENCE [LARGE SCALE MRNA]</scope>
    <source>
        <tissue>Eye</tissue>
    </source>
</reference>
<reference key="2">
    <citation type="journal article" date="2017" name="Cell Res.">
        <title>Twa1/Gid8 is a beta-catenin nuclear retention factor in Wnt signaling and colorectal tumorigenesis.</title>
        <authorList>
            <person name="Lu Y."/>
            <person name="Xie S."/>
            <person name="Zhang W."/>
            <person name="Zhang C."/>
            <person name="Gao C."/>
            <person name="Sun Q."/>
            <person name="Cai Y."/>
            <person name="Xu Z."/>
            <person name="Xiao M."/>
            <person name="Xu Y."/>
            <person name="Huang X."/>
            <person name="Wu X."/>
            <person name="Liu W."/>
            <person name="Wang F."/>
            <person name="Kang Y."/>
            <person name="Zhou T."/>
        </authorList>
    </citation>
    <scope>FUNCTION</scope>
    <scope>DEVELOPMENTAL STAGE</scope>
    <scope>DISRUPTION PHENOTYPE</scope>
</reference>
<protein>
    <recommendedName>
        <fullName>Glucose-induced degradation protein 8-A homolog</fullName>
    </recommendedName>
    <alternativeName>
        <fullName evidence="5">Two hybrid-associated protein 1 with RanBPM</fullName>
        <shortName evidence="5">Twa1</shortName>
    </alternativeName>
</protein>
<name>GID8A_DANRE</name>
<feature type="chain" id="PRO_0000328505" description="Glucose-induced degradation protein 8-A homolog">
    <location>
        <begin position="1"/>
        <end position="228"/>
    </location>
</feature>
<feature type="domain" description="LisH" evidence="3">
    <location>
        <begin position="25"/>
        <end position="57"/>
    </location>
</feature>
<feature type="domain" description="CTLH" evidence="2">
    <location>
        <begin position="63"/>
        <end position="120"/>
    </location>
</feature>
<proteinExistence type="evidence at transcript level"/>
<dbReference type="EMBL" id="BC059468">
    <property type="protein sequence ID" value="AAH59468.1"/>
    <property type="molecule type" value="mRNA"/>
</dbReference>
<dbReference type="RefSeq" id="NP_957006.1">
    <property type="nucleotide sequence ID" value="NM_200712.1"/>
</dbReference>
<dbReference type="RefSeq" id="XP_017212783.1">
    <property type="nucleotide sequence ID" value="XM_017357294.3"/>
</dbReference>
<dbReference type="SMR" id="Q6PC55"/>
<dbReference type="FunCoup" id="Q6PC55">
    <property type="interactions" value="2666"/>
</dbReference>
<dbReference type="STRING" id="7955.ENSDARP00000035630"/>
<dbReference type="PaxDb" id="7955-ENSDARP00000109237"/>
<dbReference type="Ensembl" id="ENSDART00000030920">
    <property type="protein sequence ID" value="ENSDARP00000035630"/>
    <property type="gene ID" value="ENSDARG00000022768"/>
</dbReference>
<dbReference type="Ensembl" id="ENSDART00000180284">
    <property type="protein sequence ID" value="ENSDARP00000145022"/>
    <property type="gene ID" value="ENSDARG00000022768"/>
</dbReference>
<dbReference type="GeneID" id="393685"/>
<dbReference type="KEGG" id="dre:393685"/>
<dbReference type="AGR" id="ZFIN:ZDB-GENE-040426-1669"/>
<dbReference type="CTD" id="393685"/>
<dbReference type="ZFIN" id="ZDB-GENE-040426-1669">
    <property type="gene designation" value="gid8a"/>
</dbReference>
<dbReference type="eggNOG" id="KOG2659">
    <property type="taxonomic scope" value="Eukaryota"/>
</dbReference>
<dbReference type="HOGENOM" id="CLU_073203_1_0_1"/>
<dbReference type="InParanoid" id="Q6PC55"/>
<dbReference type="OMA" id="DENCHVS"/>
<dbReference type="OrthoDB" id="2415936at2759"/>
<dbReference type="PhylomeDB" id="Q6PC55"/>
<dbReference type="TreeFam" id="TF300176"/>
<dbReference type="Reactome" id="R-DRE-9861718">
    <property type="pathway name" value="Regulation of pyruvate metabolism"/>
</dbReference>
<dbReference type="PRO" id="PR:Q6PC55"/>
<dbReference type="Proteomes" id="UP000000437">
    <property type="component" value="Chromosome 8"/>
</dbReference>
<dbReference type="Bgee" id="ENSDARG00000022768">
    <property type="expression patterns" value="Expressed in early embryo and 27 other cell types or tissues"/>
</dbReference>
<dbReference type="ExpressionAtlas" id="Q6PC55">
    <property type="expression patterns" value="baseline and differential"/>
</dbReference>
<dbReference type="GO" id="GO:0005737">
    <property type="term" value="C:cytoplasm"/>
    <property type="evidence" value="ECO:0000318"/>
    <property type="project" value="GO_Central"/>
</dbReference>
<dbReference type="GO" id="GO:0005634">
    <property type="term" value="C:nucleus"/>
    <property type="evidence" value="ECO:0000318"/>
    <property type="project" value="GO_Central"/>
</dbReference>
<dbReference type="GO" id="GO:0048263">
    <property type="term" value="P:determination of dorsal identity"/>
    <property type="evidence" value="ECO:0000315"/>
    <property type="project" value="ZFIN"/>
</dbReference>
<dbReference type="GO" id="GO:0090263">
    <property type="term" value="P:positive regulation of canonical Wnt signaling pathway"/>
    <property type="evidence" value="ECO:0000315"/>
    <property type="project" value="UniProtKB"/>
</dbReference>
<dbReference type="GO" id="GO:0043161">
    <property type="term" value="P:proteasome-mediated ubiquitin-dependent protein catabolic process"/>
    <property type="evidence" value="ECO:0000318"/>
    <property type="project" value="GO_Central"/>
</dbReference>
<dbReference type="GO" id="GO:0016055">
    <property type="term" value="P:Wnt signaling pathway"/>
    <property type="evidence" value="ECO:0007669"/>
    <property type="project" value="UniProtKB-KW"/>
</dbReference>
<dbReference type="InterPro" id="IPR013144">
    <property type="entry name" value="CRA_dom"/>
</dbReference>
<dbReference type="InterPro" id="IPR024964">
    <property type="entry name" value="CTLH/CRA"/>
</dbReference>
<dbReference type="InterPro" id="IPR006595">
    <property type="entry name" value="CTLH_C"/>
</dbReference>
<dbReference type="InterPro" id="IPR006594">
    <property type="entry name" value="LisH"/>
</dbReference>
<dbReference type="InterPro" id="IPR050618">
    <property type="entry name" value="Ubq-SigPath_Reg"/>
</dbReference>
<dbReference type="PANTHER" id="PTHR12864">
    <property type="entry name" value="RAN BINDING PROTEIN 9-RELATED"/>
    <property type="match status" value="1"/>
</dbReference>
<dbReference type="Pfam" id="PF10607">
    <property type="entry name" value="CTLH"/>
    <property type="match status" value="1"/>
</dbReference>
<dbReference type="Pfam" id="PF08513">
    <property type="entry name" value="LisH"/>
    <property type="match status" value="1"/>
</dbReference>
<dbReference type="SMART" id="SM00757">
    <property type="entry name" value="CRA"/>
    <property type="match status" value="1"/>
</dbReference>
<dbReference type="SMART" id="SM00668">
    <property type="entry name" value="CTLH"/>
    <property type="match status" value="1"/>
</dbReference>
<dbReference type="SMART" id="SM00667">
    <property type="entry name" value="LisH"/>
    <property type="match status" value="1"/>
</dbReference>
<dbReference type="PROSITE" id="PS50897">
    <property type="entry name" value="CTLH"/>
    <property type="match status" value="1"/>
</dbReference>
<dbReference type="PROSITE" id="PS50896">
    <property type="entry name" value="LISH"/>
    <property type="match status" value="1"/>
</dbReference>
<organism>
    <name type="scientific">Danio rerio</name>
    <name type="common">Zebrafish</name>
    <name type="synonym">Brachydanio rerio</name>
    <dbReference type="NCBI Taxonomy" id="7955"/>
    <lineage>
        <taxon>Eukaryota</taxon>
        <taxon>Metazoa</taxon>
        <taxon>Chordata</taxon>
        <taxon>Craniata</taxon>
        <taxon>Vertebrata</taxon>
        <taxon>Euteleostomi</taxon>
        <taxon>Actinopterygii</taxon>
        <taxon>Neopterygii</taxon>
        <taxon>Teleostei</taxon>
        <taxon>Ostariophysi</taxon>
        <taxon>Cypriniformes</taxon>
        <taxon>Danionidae</taxon>
        <taxon>Danioninae</taxon>
        <taxon>Danio</taxon>
    </lineage>
</organism>
<keyword id="KW-0217">Developmental protein</keyword>
<keyword id="KW-1185">Reference proteome</keyword>
<keyword id="KW-0879">Wnt signaling pathway</keyword>
<sequence length="228" mass="26761">MSYSEKPEDITKEEWMDKLNNVHIQRADMNRLIMNYLVTEGFKEAAEKFRMESGIEPNVDLDSLDERIKIREMVLKGQIQEAIALINSLHPELLDTNRYLYFHLQQQHLIELIRLRETEAALEFAQSQLAEQGEESRECLTEMERTLALLAFDNPEESPFGDLLNMMQRQKVWSEVNQAVLDYENRESTPKLAKLLKLLLWAQNELDQKKVKYSRMTDLSKGTIEDPK</sequence>